<keyword id="KW-0012">Acyltransferase</keyword>
<keyword id="KW-0963">Cytoplasm</keyword>
<keyword id="KW-0276">Fatty acid metabolism</keyword>
<keyword id="KW-0442">Lipid degradation</keyword>
<keyword id="KW-0443">Lipid metabolism</keyword>
<keyword id="KW-0808">Transferase</keyword>
<gene>
    <name evidence="1" type="primary">fadA</name>
    <name type="synonym">foaB</name>
    <name type="ordered locus">PA14_25090</name>
</gene>
<reference key="1">
    <citation type="journal article" date="2006" name="Genome Biol.">
        <title>Genomic analysis reveals that Pseudomonas aeruginosa virulence is combinatorial.</title>
        <authorList>
            <person name="Lee D.G."/>
            <person name="Urbach J.M."/>
            <person name="Wu G."/>
            <person name="Liberati N.T."/>
            <person name="Feinbaum R.L."/>
            <person name="Miyata S."/>
            <person name="Diggins L.T."/>
            <person name="He J."/>
            <person name="Saucier M."/>
            <person name="Deziel E."/>
            <person name="Friedman L."/>
            <person name="Li L."/>
            <person name="Grills G."/>
            <person name="Montgomery K."/>
            <person name="Kucherlapati R."/>
            <person name="Rahme L.G."/>
            <person name="Ausubel F.M."/>
        </authorList>
    </citation>
    <scope>NUCLEOTIDE SEQUENCE [LARGE SCALE GENOMIC DNA]</scope>
    <source>
        <strain>UCBPP-PA14</strain>
    </source>
</reference>
<name>FADA_PSEAB</name>
<sequence length="391" mass="41628">MSLNPRDVVIVDFGRTPMGRSKGGMHRNTRAETMSAHLISKLLERNPKVDPAEVEDVIWGCVNQTLEQGWNIARMASLMTQIPHTSAAQTVSRLCGSSMSALHTAAQAIQTGNGDVFVIGGVEHMGHVGMMHGVDPNPHLSLYAAKASGMMGLTAEMLGKMHGISREAQDKFGARSHQLAWKATQEGKFKDEIIPMEGYDENGFLKVFDFDETIRPETTVETLAQLKPAFNPKGGTVTAGTSSQITDGASCMIVMSAQRAQDLGIQPMAVIRSMAVAGVDPAIMGYGPVPSTNKALKRAGLTIADIDFVELNEAFAAQALPVLKDLKLLDKMDEKVNLHGGAIALGHPFGCSGARISGTLLNVMKQNGGTLGVSTMCVGLGQGITTVFERV</sequence>
<organism>
    <name type="scientific">Pseudomonas aeruginosa (strain UCBPP-PA14)</name>
    <dbReference type="NCBI Taxonomy" id="208963"/>
    <lineage>
        <taxon>Bacteria</taxon>
        <taxon>Pseudomonadati</taxon>
        <taxon>Pseudomonadota</taxon>
        <taxon>Gammaproteobacteria</taxon>
        <taxon>Pseudomonadales</taxon>
        <taxon>Pseudomonadaceae</taxon>
        <taxon>Pseudomonas</taxon>
    </lineage>
</organism>
<feature type="chain" id="PRO_0000292895" description="3-ketoacyl-CoA thiolase">
    <location>
        <begin position="1"/>
        <end position="391"/>
    </location>
</feature>
<feature type="active site" description="Acyl-thioester intermediate" evidence="1">
    <location>
        <position position="95"/>
    </location>
</feature>
<feature type="active site" description="Proton acceptor" evidence="1">
    <location>
        <position position="347"/>
    </location>
</feature>
<feature type="active site" description="Proton acceptor" evidence="1">
    <location>
        <position position="377"/>
    </location>
</feature>
<evidence type="ECO:0000255" key="1">
    <source>
        <dbReference type="HAMAP-Rule" id="MF_01620"/>
    </source>
</evidence>
<comment type="function">
    <text evidence="1">Catalyzes the final step of fatty acid oxidation in which acetyl-CoA is released and the CoA ester of a fatty acid two carbons shorter is formed.</text>
</comment>
<comment type="catalytic activity">
    <reaction evidence="1">
        <text>an acyl-CoA + acetyl-CoA = a 3-oxoacyl-CoA + CoA</text>
        <dbReference type="Rhea" id="RHEA:21564"/>
        <dbReference type="ChEBI" id="CHEBI:57287"/>
        <dbReference type="ChEBI" id="CHEBI:57288"/>
        <dbReference type="ChEBI" id="CHEBI:58342"/>
        <dbReference type="ChEBI" id="CHEBI:90726"/>
        <dbReference type="EC" id="2.3.1.16"/>
    </reaction>
</comment>
<comment type="pathway">
    <text evidence="1">Lipid metabolism; fatty acid beta-oxidation.</text>
</comment>
<comment type="subunit">
    <text evidence="1">Heterotetramer of two alpha chains (FadB) and two beta chains (FadA).</text>
</comment>
<comment type="subcellular location">
    <subcellularLocation>
        <location evidence="1">Cytoplasm</location>
    </subcellularLocation>
</comment>
<comment type="similarity">
    <text evidence="1">Belongs to the thiolase-like superfamily. Thiolase family.</text>
</comment>
<protein>
    <recommendedName>
        <fullName evidence="1">3-ketoacyl-CoA thiolase</fullName>
        <ecNumber evidence="1">2.3.1.16</ecNumber>
    </recommendedName>
    <alternativeName>
        <fullName evidence="1">Acetyl-CoA acyltransferase</fullName>
    </alternativeName>
    <alternativeName>
        <fullName evidence="1">Beta-ketothiolase</fullName>
    </alternativeName>
    <alternativeName>
        <fullName evidence="1">Fatty acid oxidation complex subunit beta</fullName>
    </alternativeName>
</protein>
<accession>Q02PH7</accession>
<dbReference type="EC" id="2.3.1.16" evidence="1"/>
<dbReference type="EMBL" id="CP000438">
    <property type="protein sequence ID" value="ABJ12250.1"/>
    <property type="molecule type" value="Genomic_DNA"/>
</dbReference>
<dbReference type="RefSeq" id="WP_003138585.1">
    <property type="nucleotide sequence ID" value="NZ_CP034244.1"/>
</dbReference>
<dbReference type="SMR" id="Q02PH7"/>
<dbReference type="GeneID" id="77220495"/>
<dbReference type="KEGG" id="pau:PA14_25090"/>
<dbReference type="PseudoCAP" id="PA14_25090"/>
<dbReference type="HOGENOM" id="CLU_031026_2_3_6"/>
<dbReference type="BioCyc" id="PAER208963:G1G74-2094-MONOMER"/>
<dbReference type="UniPathway" id="UPA00659"/>
<dbReference type="Proteomes" id="UP000000653">
    <property type="component" value="Chromosome"/>
</dbReference>
<dbReference type="GO" id="GO:0005737">
    <property type="term" value="C:cytoplasm"/>
    <property type="evidence" value="ECO:0007669"/>
    <property type="project" value="UniProtKB-SubCell"/>
</dbReference>
<dbReference type="GO" id="GO:0003988">
    <property type="term" value="F:acetyl-CoA C-acyltransferase activity"/>
    <property type="evidence" value="ECO:0007669"/>
    <property type="project" value="UniProtKB-UniRule"/>
</dbReference>
<dbReference type="GO" id="GO:0006635">
    <property type="term" value="P:fatty acid beta-oxidation"/>
    <property type="evidence" value="ECO:0007669"/>
    <property type="project" value="UniProtKB-UniRule"/>
</dbReference>
<dbReference type="GO" id="GO:0010124">
    <property type="term" value="P:phenylacetate catabolic process"/>
    <property type="evidence" value="ECO:0007669"/>
    <property type="project" value="TreeGrafter"/>
</dbReference>
<dbReference type="CDD" id="cd00751">
    <property type="entry name" value="thiolase"/>
    <property type="match status" value="1"/>
</dbReference>
<dbReference type="FunFam" id="3.40.47.10:FF:000010">
    <property type="entry name" value="Acetyl-CoA acetyltransferase (Thiolase)"/>
    <property type="match status" value="1"/>
</dbReference>
<dbReference type="Gene3D" id="3.40.47.10">
    <property type="match status" value="2"/>
</dbReference>
<dbReference type="HAMAP" id="MF_01620">
    <property type="entry name" value="FadA"/>
    <property type="match status" value="1"/>
</dbReference>
<dbReference type="InterPro" id="IPR012805">
    <property type="entry name" value="FadA"/>
</dbReference>
<dbReference type="InterPro" id="IPR002155">
    <property type="entry name" value="Thiolase"/>
</dbReference>
<dbReference type="InterPro" id="IPR016039">
    <property type="entry name" value="Thiolase-like"/>
</dbReference>
<dbReference type="InterPro" id="IPR050215">
    <property type="entry name" value="Thiolase-like_sf_Thiolase"/>
</dbReference>
<dbReference type="InterPro" id="IPR020615">
    <property type="entry name" value="Thiolase_acyl_enz_int_AS"/>
</dbReference>
<dbReference type="InterPro" id="IPR020617">
    <property type="entry name" value="Thiolase_C"/>
</dbReference>
<dbReference type="InterPro" id="IPR020613">
    <property type="entry name" value="Thiolase_CS"/>
</dbReference>
<dbReference type="InterPro" id="IPR020616">
    <property type="entry name" value="Thiolase_N"/>
</dbReference>
<dbReference type="NCBIfam" id="TIGR01930">
    <property type="entry name" value="AcCoA-C-Actrans"/>
    <property type="match status" value="1"/>
</dbReference>
<dbReference type="NCBIfam" id="TIGR02445">
    <property type="entry name" value="fadA"/>
    <property type="match status" value="1"/>
</dbReference>
<dbReference type="NCBIfam" id="NF006510">
    <property type="entry name" value="PRK08947.1"/>
    <property type="match status" value="1"/>
</dbReference>
<dbReference type="PANTHER" id="PTHR43853:SF11">
    <property type="entry name" value="3-KETOACYL-COA THIOLASE FADA"/>
    <property type="match status" value="1"/>
</dbReference>
<dbReference type="PANTHER" id="PTHR43853">
    <property type="entry name" value="3-KETOACYL-COA THIOLASE, PEROXISOMAL"/>
    <property type="match status" value="1"/>
</dbReference>
<dbReference type="Pfam" id="PF02803">
    <property type="entry name" value="Thiolase_C"/>
    <property type="match status" value="1"/>
</dbReference>
<dbReference type="Pfam" id="PF00108">
    <property type="entry name" value="Thiolase_N"/>
    <property type="match status" value="1"/>
</dbReference>
<dbReference type="PIRSF" id="PIRSF000429">
    <property type="entry name" value="Ac-CoA_Ac_transf"/>
    <property type="match status" value="1"/>
</dbReference>
<dbReference type="SUPFAM" id="SSF53901">
    <property type="entry name" value="Thiolase-like"/>
    <property type="match status" value="2"/>
</dbReference>
<dbReference type="PROSITE" id="PS00098">
    <property type="entry name" value="THIOLASE_1"/>
    <property type="match status" value="1"/>
</dbReference>
<dbReference type="PROSITE" id="PS00737">
    <property type="entry name" value="THIOLASE_2"/>
    <property type="match status" value="1"/>
</dbReference>
<proteinExistence type="inferred from homology"/>